<organism>
    <name type="scientific">Oryza sativa subsp. indica</name>
    <name type="common">Rice</name>
    <dbReference type="NCBI Taxonomy" id="39946"/>
    <lineage>
        <taxon>Eukaryota</taxon>
        <taxon>Viridiplantae</taxon>
        <taxon>Streptophyta</taxon>
        <taxon>Embryophyta</taxon>
        <taxon>Tracheophyta</taxon>
        <taxon>Spermatophyta</taxon>
        <taxon>Magnoliopsida</taxon>
        <taxon>Liliopsida</taxon>
        <taxon>Poales</taxon>
        <taxon>Poaceae</taxon>
        <taxon>BOP clade</taxon>
        <taxon>Oryzoideae</taxon>
        <taxon>Oryzeae</taxon>
        <taxon>Oryzinae</taxon>
        <taxon>Oryza</taxon>
        <taxon>Oryza sativa</taxon>
    </lineage>
</organism>
<reference key="1">
    <citation type="journal article" date="2004" name="Plant Physiol.">
        <title>A comparison of rice chloroplast genomes.</title>
        <authorList>
            <person name="Tang J."/>
            <person name="Xia H."/>
            <person name="Cao M."/>
            <person name="Zhang X."/>
            <person name="Zeng W."/>
            <person name="Hu S."/>
            <person name="Tong W."/>
            <person name="Wang J."/>
            <person name="Wang J."/>
            <person name="Yu J."/>
            <person name="Yang H."/>
            <person name="Zhu L."/>
        </authorList>
    </citation>
    <scope>NUCLEOTIDE SEQUENCE [LARGE SCALE GENOMIC DNA]</scope>
    <source>
        <strain>cv. 93-11</strain>
    </source>
</reference>
<evidence type="ECO:0000255" key="1">
    <source>
        <dbReference type="HAMAP-Rule" id="MF_01393"/>
    </source>
</evidence>
<evidence type="ECO:0000305" key="2"/>
<gene>
    <name evidence="1" type="primary">atpI</name>
    <name type="ORF">9311039</name>
</gene>
<feature type="chain" id="PRO_0000288514" description="ATP synthase subunit a, chloroplastic">
    <location>
        <begin position="1"/>
        <end position="247"/>
    </location>
</feature>
<feature type="transmembrane region" description="Helical" evidence="1">
    <location>
        <begin position="38"/>
        <end position="58"/>
    </location>
</feature>
<feature type="transmembrane region" description="Helical" evidence="1">
    <location>
        <begin position="95"/>
        <end position="115"/>
    </location>
</feature>
<feature type="transmembrane region" description="Helical" evidence="1">
    <location>
        <begin position="134"/>
        <end position="154"/>
    </location>
</feature>
<feature type="transmembrane region" description="Helical" evidence="1">
    <location>
        <begin position="199"/>
        <end position="219"/>
    </location>
</feature>
<feature type="transmembrane region" description="Helical" evidence="1">
    <location>
        <begin position="220"/>
        <end position="240"/>
    </location>
</feature>
<dbReference type="EMBL" id="AY522329">
    <property type="protein sequence ID" value="AAS46050.1"/>
    <property type="status" value="ALT_INIT"/>
    <property type="molecule type" value="Genomic_DNA"/>
</dbReference>
<dbReference type="RefSeq" id="YP_009161358.1">
    <property type="nucleotide sequence ID" value="NC_027678.1"/>
</dbReference>
<dbReference type="RefSeq" id="YP_654210.2">
    <property type="nucleotide sequence ID" value="NC_008155.1"/>
</dbReference>
<dbReference type="SMR" id="P0C2Y6"/>
<dbReference type="STRING" id="39946.P0C2Y6"/>
<dbReference type="GeneID" id="4126880"/>
<dbReference type="Proteomes" id="UP000007015">
    <property type="component" value="Chloroplast"/>
</dbReference>
<dbReference type="GO" id="GO:0009535">
    <property type="term" value="C:chloroplast thylakoid membrane"/>
    <property type="evidence" value="ECO:0007669"/>
    <property type="project" value="UniProtKB-SubCell"/>
</dbReference>
<dbReference type="GO" id="GO:0005886">
    <property type="term" value="C:plasma membrane"/>
    <property type="evidence" value="ECO:0007669"/>
    <property type="project" value="UniProtKB-UniRule"/>
</dbReference>
<dbReference type="GO" id="GO:0009536">
    <property type="term" value="C:plastid"/>
    <property type="evidence" value="ECO:0000305"/>
    <property type="project" value="Gramene"/>
</dbReference>
<dbReference type="GO" id="GO:0045259">
    <property type="term" value="C:proton-transporting ATP synthase complex"/>
    <property type="evidence" value="ECO:0007669"/>
    <property type="project" value="UniProtKB-KW"/>
</dbReference>
<dbReference type="GO" id="GO:0046933">
    <property type="term" value="F:proton-transporting ATP synthase activity, rotational mechanism"/>
    <property type="evidence" value="ECO:0007669"/>
    <property type="project" value="UniProtKB-UniRule"/>
</dbReference>
<dbReference type="CDD" id="cd00310">
    <property type="entry name" value="ATP-synt_Fo_a_6"/>
    <property type="match status" value="1"/>
</dbReference>
<dbReference type="FunFam" id="1.20.120.220:FF:000001">
    <property type="entry name" value="ATP synthase subunit a, chloroplastic"/>
    <property type="match status" value="1"/>
</dbReference>
<dbReference type="Gene3D" id="1.20.120.220">
    <property type="entry name" value="ATP synthase, F0 complex, subunit A"/>
    <property type="match status" value="1"/>
</dbReference>
<dbReference type="HAMAP" id="MF_01393">
    <property type="entry name" value="ATP_synth_a_bact"/>
    <property type="match status" value="1"/>
</dbReference>
<dbReference type="InterPro" id="IPR045082">
    <property type="entry name" value="ATP_syn_F0_a_bact/chloroplast"/>
</dbReference>
<dbReference type="InterPro" id="IPR000568">
    <property type="entry name" value="ATP_synth_F0_asu"/>
</dbReference>
<dbReference type="InterPro" id="IPR023011">
    <property type="entry name" value="ATP_synth_F0_asu_AS"/>
</dbReference>
<dbReference type="InterPro" id="IPR035908">
    <property type="entry name" value="F0_ATP_A_sf"/>
</dbReference>
<dbReference type="NCBIfam" id="TIGR01131">
    <property type="entry name" value="ATP_synt_6_or_A"/>
    <property type="match status" value="1"/>
</dbReference>
<dbReference type="PANTHER" id="PTHR42823">
    <property type="entry name" value="ATP SYNTHASE SUBUNIT A, CHLOROPLASTIC"/>
    <property type="match status" value="1"/>
</dbReference>
<dbReference type="PANTHER" id="PTHR42823:SF3">
    <property type="entry name" value="ATP SYNTHASE SUBUNIT A, CHLOROPLASTIC"/>
    <property type="match status" value="1"/>
</dbReference>
<dbReference type="Pfam" id="PF00119">
    <property type="entry name" value="ATP-synt_A"/>
    <property type="match status" value="1"/>
</dbReference>
<dbReference type="PRINTS" id="PR00123">
    <property type="entry name" value="ATPASEA"/>
</dbReference>
<dbReference type="SUPFAM" id="SSF81336">
    <property type="entry name" value="F1F0 ATP synthase subunit A"/>
    <property type="match status" value="1"/>
</dbReference>
<dbReference type="PROSITE" id="PS00449">
    <property type="entry name" value="ATPASE_A"/>
    <property type="match status" value="1"/>
</dbReference>
<proteinExistence type="inferred from homology"/>
<protein>
    <recommendedName>
        <fullName evidence="1">ATP synthase subunit a, chloroplastic</fullName>
    </recommendedName>
    <alternativeName>
        <fullName evidence="1">ATP synthase F0 sector subunit a</fullName>
    </alternativeName>
    <alternativeName>
        <fullName evidence="1">F-ATPase subunit IV</fullName>
    </alternativeName>
</protein>
<sequence>MNIIPCSIKTLKGLYDISGVEVGQHFYWQIGGFQIHAQVLITSWVVITILLGSVIIAVRNPQTIPTDGQNFFEYVLEFIRDLSKTQIGEEYGPWVPFIGTMFLFIFVSNWSGALLPWKIIQLPHGELAAPTNDINTTVALALLTSAAYFYAGLSKKGLSYFEKYIKPTPILLPINILEDFTKPLSLSFRLFGNILADELVVVVLVSLVPLVVPIPVMFLGLFTSGIQALIFATLAAAYIGESMEGHH</sequence>
<geneLocation type="chloroplast"/>
<comment type="function">
    <text evidence="1">Key component of the proton channel; it plays a direct role in the translocation of protons across the membrane.</text>
</comment>
<comment type="subunit">
    <text evidence="1">F-type ATPases have 2 components, CF(1) - the catalytic core - and CF(0) - the membrane proton channel. CF(1) has five subunits: alpha(3), beta(3), gamma(1), delta(1), epsilon(1). CF(0) has four main subunits: a, b, b' and c.</text>
</comment>
<comment type="subcellular location">
    <subcellularLocation>
        <location evidence="1">Plastid</location>
        <location evidence="1">Chloroplast thylakoid membrane</location>
        <topology evidence="1">Multi-pass membrane protein</topology>
    </subcellularLocation>
</comment>
<comment type="similarity">
    <text evidence="1">Belongs to the ATPase A chain family.</text>
</comment>
<comment type="sequence caution" evidence="2">
    <conflict type="erroneous initiation">
        <sequence resource="EMBL-CDS" id="AAS46050"/>
    </conflict>
</comment>
<keyword id="KW-0066">ATP synthesis</keyword>
<keyword id="KW-0138">CF(0)</keyword>
<keyword id="KW-0150">Chloroplast</keyword>
<keyword id="KW-0375">Hydrogen ion transport</keyword>
<keyword id="KW-0406">Ion transport</keyword>
<keyword id="KW-0472">Membrane</keyword>
<keyword id="KW-0934">Plastid</keyword>
<keyword id="KW-1185">Reference proteome</keyword>
<keyword id="KW-0793">Thylakoid</keyword>
<keyword id="KW-0812">Transmembrane</keyword>
<keyword id="KW-1133">Transmembrane helix</keyword>
<keyword id="KW-0813">Transport</keyword>
<name>ATPI_ORYSI</name>
<accession>P0C2Y6</accession>
<accession>P12083</accession>
<accession>Q6QY16</accession>
<accession>Q6QY79</accession>